<proteinExistence type="inferred from homology"/>
<keyword id="KW-0067">ATP-binding</keyword>
<keyword id="KW-0963">Cytoplasm</keyword>
<keyword id="KW-0227">DNA damage</keyword>
<keyword id="KW-0234">DNA repair</keyword>
<keyword id="KW-0235">DNA replication</keyword>
<keyword id="KW-0238">DNA-binding</keyword>
<keyword id="KW-0547">Nucleotide-binding</keyword>
<keyword id="KW-0742">SOS response</keyword>
<gene>
    <name evidence="1" type="primary">recF</name>
    <name type="ordered locus">SaurJH9_0004</name>
</gene>
<feature type="chain" id="PRO_1000079609" description="DNA replication and repair protein RecF">
    <location>
        <begin position="1"/>
        <end position="370"/>
    </location>
</feature>
<feature type="binding site" evidence="1">
    <location>
        <begin position="30"/>
        <end position="37"/>
    </location>
    <ligand>
        <name>ATP</name>
        <dbReference type="ChEBI" id="CHEBI:30616"/>
    </ligand>
</feature>
<dbReference type="EMBL" id="CP000703">
    <property type="protein sequence ID" value="ABQ47818.1"/>
    <property type="molecule type" value="Genomic_DNA"/>
</dbReference>
<dbReference type="RefSeq" id="WP_000775113.1">
    <property type="nucleotide sequence ID" value="NC_009487.1"/>
</dbReference>
<dbReference type="SMR" id="A5INP5"/>
<dbReference type="KEGG" id="saj:SaurJH9_0004"/>
<dbReference type="HOGENOM" id="CLU_040267_0_1_9"/>
<dbReference type="GO" id="GO:0005737">
    <property type="term" value="C:cytoplasm"/>
    <property type="evidence" value="ECO:0007669"/>
    <property type="project" value="UniProtKB-SubCell"/>
</dbReference>
<dbReference type="GO" id="GO:0005524">
    <property type="term" value="F:ATP binding"/>
    <property type="evidence" value="ECO:0007669"/>
    <property type="project" value="UniProtKB-UniRule"/>
</dbReference>
<dbReference type="GO" id="GO:0003697">
    <property type="term" value="F:single-stranded DNA binding"/>
    <property type="evidence" value="ECO:0007669"/>
    <property type="project" value="UniProtKB-UniRule"/>
</dbReference>
<dbReference type="GO" id="GO:0006260">
    <property type="term" value="P:DNA replication"/>
    <property type="evidence" value="ECO:0007669"/>
    <property type="project" value="UniProtKB-UniRule"/>
</dbReference>
<dbReference type="GO" id="GO:0000731">
    <property type="term" value="P:DNA synthesis involved in DNA repair"/>
    <property type="evidence" value="ECO:0007669"/>
    <property type="project" value="TreeGrafter"/>
</dbReference>
<dbReference type="GO" id="GO:0006302">
    <property type="term" value="P:double-strand break repair"/>
    <property type="evidence" value="ECO:0007669"/>
    <property type="project" value="TreeGrafter"/>
</dbReference>
<dbReference type="GO" id="GO:0009432">
    <property type="term" value="P:SOS response"/>
    <property type="evidence" value="ECO:0007669"/>
    <property type="project" value="UniProtKB-UniRule"/>
</dbReference>
<dbReference type="CDD" id="cd03242">
    <property type="entry name" value="ABC_RecF"/>
    <property type="match status" value="1"/>
</dbReference>
<dbReference type="FunFam" id="1.20.1050.90:FF:000002">
    <property type="entry name" value="DNA replication and repair protein RecF"/>
    <property type="match status" value="1"/>
</dbReference>
<dbReference type="Gene3D" id="3.40.50.300">
    <property type="entry name" value="P-loop containing nucleotide triphosphate hydrolases"/>
    <property type="match status" value="1"/>
</dbReference>
<dbReference type="Gene3D" id="1.20.1050.90">
    <property type="entry name" value="RecF/RecN/SMC, N-terminal domain"/>
    <property type="match status" value="1"/>
</dbReference>
<dbReference type="HAMAP" id="MF_00365">
    <property type="entry name" value="RecF"/>
    <property type="match status" value="1"/>
</dbReference>
<dbReference type="InterPro" id="IPR001238">
    <property type="entry name" value="DNA-binding_RecF"/>
</dbReference>
<dbReference type="InterPro" id="IPR018078">
    <property type="entry name" value="DNA-binding_RecF_CS"/>
</dbReference>
<dbReference type="InterPro" id="IPR027417">
    <property type="entry name" value="P-loop_NTPase"/>
</dbReference>
<dbReference type="InterPro" id="IPR003395">
    <property type="entry name" value="RecF/RecN/SMC_N"/>
</dbReference>
<dbReference type="InterPro" id="IPR042174">
    <property type="entry name" value="RecF_2"/>
</dbReference>
<dbReference type="NCBIfam" id="TIGR00611">
    <property type="entry name" value="recf"/>
    <property type="match status" value="1"/>
</dbReference>
<dbReference type="PANTHER" id="PTHR32182">
    <property type="entry name" value="DNA REPLICATION AND REPAIR PROTEIN RECF"/>
    <property type="match status" value="1"/>
</dbReference>
<dbReference type="PANTHER" id="PTHR32182:SF0">
    <property type="entry name" value="DNA REPLICATION AND REPAIR PROTEIN RECF"/>
    <property type="match status" value="1"/>
</dbReference>
<dbReference type="Pfam" id="PF02463">
    <property type="entry name" value="SMC_N"/>
    <property type="match status" value="1"/>
</dbReference>
<dbReference type="SUPFAM" id="SSF52540">
    <property type="entry name" value="P-loop containing nucleoside triphosphate hydrolases"/>
    <property type="match status" value="1"/>
</dbReference>
<dbReference type="PROSITE" id="PS00617">
    <property type="entry name" value="RECF_1"/>
    <property type="match status" value="1"/>
</dbReference>
<dbReference type="PROSITE" id="PS00618">
    <property type="entry name" value="RECF_2"/>
    <property type="match status" value="1"/>
</dbReference>
<reference key="1">
    <citation type="submission" date="2007-05" db="EMBL/GenBank/DDBJ databases">
        <title>Complete sequence of chromosome of Staphylococcus aureus subsp. aureus JH9.</title>
        <authorList>
            <consortium name="US DOE Joint Genome Institute"/>
            <person name="Copeland A."/>
            <person name="Lucas S."/>
            <person name="Lapidus A."/>
            <person name="Barry K."/>
            <person name="Detter J.C."/>
            <person name="Glavina del Rio T."/>
            <person name="Hammon N."/>
            <person name="Israni S."/>
            <person name="Pitluck S."/>
            <person name="Chain P."/>
            <person name="Malfatti S."/>
            <person name="Shin M."/>
            <person name="Vergez L."/>
            <person name="Schmutz J."/>
            <person name="Larimer F."/>
            <person name="Land M."/>
            <person name="Hauser L."/>
            <person name="Kyrpides N."/>
            <person name="Kim E."/>
            <person name="Tomasz A."/>
            <person name="Richardson P."/>
        </authorList>
    </citation>
    <scope>NUCLEOTIDE SEQUENCE [LARGE SCALE GENOMIC DNA]</scope>
    <source>
        <strain>JH9</strain>
    </source>
</reference>
<name>RECF_STAA9</name>
<comment type="function">
    <text evidence="1">The RecF protein is involved in DNA metabolism; it is required for DNA replication and normal SOS inducibility. RecF binds preferentially to single-stranded, linear DNA. It also seems to bind ATP.</text>
</comment>
<comment type="subcellular location">
    <subcellularLocation>
        <location evidence="1">Cytoplasm</location>
    </subcellularLocation>
</comment>
<comment type="similarity">
    <text evidence="1">Belongs to the RecF family.</text>
</comment>
<sequence>MKLNTLQLENYRNYDEVTLKCHPDVNILIGENAQGKTNLLESIYTLALAKSHRTSNDKELIRFNADYAKIEGELSYRHGTMPLTMFITKKGKQVKVNHLEQSRLTQYIGHLNVVLFAPEDLNIVKGSPQIRRRFIDMELGQISAVYLNDLAQYQRILKQKNNYLKQLQLGQKKDLTMLEVLNQQFAEYAMKVTDKRAHFIQELESLAKPIHAGITNDKEALSLNYLPSLKFDYAQNEAARLEEIMSILSDNMQREKERGISLFGPHRDDISFDVNGMDAQTYGSQGQQRTTALSIKLAEIELMNIEVGEYPILLLDDVLSELDDSRQTHLLSTIQHKVQTFVTTTSVDGIDHEIMNNAKLYRINQGEIIK</sequence>
<protein>
    <recommendedName>
        <fullName evidence="1">DNA replication and repair protein RecF</fullName>
    </recommendedName>
</protein>
<organism>
    <name type="scientific">Staphylococcus aureus (strain JH9)</name>
    <dbReference type="NCBI Taxonomy" id="359786"/>
    <lineage>
        <taxon>Bacteria</taxon>
        <taxon>Bacillati</taxon>
        <taxon>Bacillota</taxon>
        <taxon>Bacilli</taxon>
        <taxon>Bacillales</taxon>
        <taxon>Staphylococcaceae</taxon>
        <taxon>Staphylococcus</taxon>
    </lineage>
</organism>
<accession>A5INP5</accession>
<evidence type="ECO:0000255" key="1">
    <source>
        <dbReference type="HAMAP-Rule" id="MF_00365"/>
    </source>
</evidence>